<accession>Q6GQH4</accession>
<accession>Q9I831</accession>
<comment type="function">
    <text evidence="1 2">Transcriptional regulator. Recognizes and binds to the DNA sequence 5'-GCG(T/G)GGGCG-3'(EGR-site) in the promoter region of target genes (By similarity). Binds double-stranded target DNA, irrespective of the cytosine methylation status (By similarity). Regulates the transcription of numerous target genes, and thereby plays an important role in regulating the response to growth factors, DNA damage, and ischemia. Plays a role in the regulation of cell survival, proliferation and cell death. Mediates responses to ischemia and hypoxia; regulates the expression of proteins that are involved in inflammatory processes (By similarity). Plays a role in regulating the expression of circadian clock genes (By similarity).</text>
</comment>
<comment type="subcellular location">
    <subcellularLocation>
        <location evidence="2">Nucleus</location>
    </subcellularLocation>
    <subcellularLocation>
        <location evidence="2">Cytoplasm</location>
    </subcellularLocation>
</comment>
<comment type="tissue specificity">
    <text evidence="8 9">Expressed in the presumptive mesoderm. In blastula embryos, expressed in the dorsal marginal zone, and at the onset of gastrulation expression is specific to the Spemann organizer. As gastrulation proceeds, expressed in a ring around the yolk plug. This expression is maintained in advanced gastrulae, with weak expression also extending into the dorsal midline. By the neurula stage, expression is excluded from the notochord. In late tailbud stages, expressed in two spots in the anterior forebrain, which are connected via a bridge of cells that also show expression.</text>
</comment>
<comment type="developmental stage">
    <text evidence="9">Expressed both maternally and zygotically. Expressed at a low level maternally, with expression strongly increasing with the onset of gastrulation, then decreasing again in later stages of embryonic development with expression undetectable during neurulation. Expressed in adults.</text>
</comment>
<comment type="induction">
    <text evidence="6 7 8 9">By dorsalizing and ventralizing growth factors during mesoderm induction. Responds to the FGF-induced MAPK/Ets-serum response factor (srf-elk1)-signaling pathway. Induced by activin and bmp4 acting indirectly via an FGF-signaling pathway. Induced in response to wound-induced activation of the MAPK pathway. Induced by both t/bra and foxa4/pintallavis alone, with maximal activation requiring both transcription factors. Induction by t/bra is indirect and probably occurs via the FGF-signaling pathway, whereas induction by foxa4/pintallavis may be direct.</text>
</comment>
<comment type="domain">
    <text evidence="2">Binds to DNA motifs with the sequence 5'-GCG(T/G)GGGCG-3' via its C2H2-type zinc fingers. The first, most N-terminal zinc finger binds to the 3'-GCG motif, the middle zinc finger interacts with the central TGG motif, and the C-terminal zinc finger binds to the 5'-GCG motif. Binds double-stranded target DNA, irrespective of the cytosine methylation status. Has reduced affinity for target DNA where the cytosines have been oxidized to 5-hydroxymethylcytosine. Does not bind target DNA where the cytosines have been oxidized to 5-formylcytosine or 5-carboxylcytosine.</text>
</comment>
<comment type="similarity">
    <text evidence="3">Belongs to the EGR C2H2-type zinc-finger protein family.</text>
</comment>
<organism>
    <name type="scientific">Xenopus laevis</name>
    <name type="common">African clawed frog</name>
    <dbReference type="NCBI Taxonomy" id="8355"/>
    <lineage>
        <taxon>Eukaryota</taxon>
        <taxon>Metazoa</taxon>
        <taxon>Chordata</taxon>
        <taxon>Craniata</taxon>
        <taxon>Vertebrata</taxon>
        <taxon>Euteleostomi</taxon>
        <taxon>Amphibia</taxon>
        <taxon>Batrachia</taxon>
        <taxon>Anura</taxon>
        <taxon>Pipoidea</taxon>
        <taxon>Pipidae</taxon>
        <taxon>Xenopodinae</taxon>
        <taxon>Xenopus</taxon>
        <taxon>Xenopus</taxon>
    </lineage>
</organism>
<evidence type="ECO:0000250" key="1">
    <source>
        <dbReference type="UniProtKB" id="P08046"/>
    </source>
</evidence>
<evidence type="ECO:0000250" key="2">
    <source>
        <dbReference type="UniProtKB" id="P18146"/>
    </source>
</evidence>
<evidence type="ECO:0000255" key="3"/>
<evidence type="ECO:0000255" key="4">
    <source>
        <dbReference type="PROSITE-ProRule" id="PRU00042"/>
    </source>
</evidence>
<evidence type="ECO:0000256" key="5">
    <source>
        <dbReference type="SAM" id="MobiDB-lite"/>
    </source>
</evidence>
<evidence type="ECO:0000269" key="6">
    <source>
    </source>
</evidence>
<evidence type="ECO:0000269" key="7">
    <source>
    </source>
</evidence>
<evidence type="ECO:0000269" key="8">
    <source>
    </source>
</evidence>
<evidence type="ECO:0000269" key="9">
    <source>
    </source>
</evidence>
<evidence type="ECO:0000303" key="10">
    <source>
    </source>
</evidence>
<evidence type="ECO:0000305" key="11"/>
<evidence type="ECO:0000312" key="12">
    <source>
        <dbReference type="EMBL" id="AAF66986.1"/>
    </source>
</evidence>
<evidence type="ECO:0000312" key="13">
    <source>
        <dbReference type="EMBL" id="AAH72770.1"/>
    </source>
</evidence>
<dbReference type="EMBL" id="AF250345">
    <property type="protein sequence ID" value="AAF66986.1"/>
    <property type="molecule type" value="mRNA"/>
</dbReference>
<dbReference type="EMBL" id="BC072770">
    <property type="protein sequence ID" value="AAH72770.1"/>
    <property type="molecule type" value="mRNA"/>
</dbReference>
<dbReference type="RefSeq" id="NP_001083862.1">
    <property type="nucleotide sequence ID" value="NM_001090393.1"/>
</dbReference>
<dbReference type="SMR" id="Q6GQH4"/>
<dbReference type="DNASU" id="399162"/>
<dbReference type="GeneID" id="399162"/>
<dbReference type="KEGG" id="xla:399162"/>
<dbReference type="AGR" id="Xenbase:XB-GENE-853419"/>
<dbReference type="CTD" id="399162"/>
<dbReference type="Xenbase" id="XB-GENE-853419">
    <property type="gene designation" value="egr1.L"/>
</dbReference>
<dbReference type="OMA" id="GDQFDHL"/>
<dbReference type="OrthoDB" id="10018191at2759"/>
<dbReference type="Proteomes" id="UP000186698">
    <property type="component" value="Chromosome 3L"/>
</dbReference>
<dbReference type="Bgee" id="399162">
    <property type="expression patterns" value="Expressed in brain and 17 other cell types or tissues"/>
</dbReference>
<dbReference type="GO" id="GO:0005737">
    <property type="term" value="C:cytoplasm"/>
    <property type="evidence" value="ECO:0000250"/>
    <property type="project" value="UniProtKB"/>
</dbReference>
<dbReference type="GO" id="GO:0005634">
    <property type="term" value="C:nucleus"/>
    <property type="evidence" value="ECO:0000250"/>
    <property type="project" value="UniProtKB"/>
</dbReference>
<dbReference type="GO" id="GO:0003700">
    <property type="term" value="F:DNA-binding transcription factor activity"/>
    <property type="evidence" value="ECO:0000250"/>
    <property type="project" value="UniProtKB"/>
</dbReference>
<dbReference type="GO" id="GO:0000981">
    <property type="term" value="F:DNA-binding transcription factor activity, RNA polymerase II-specific"/>
    <property type="evidence" value="ECO:0000318"/>
    <property type="project" value="GO_Central"/>
</dbReference>
<dbReference type="GO" id="GO:0010385">
    <property type="term" value="F:double-stranded methylated DNA binding"/>
    <property type="evidence" value="ECO:0000250"/>
    <property type="project" value="UniProtKB"/>
</dbReference>
<dbReference type="GO" id="GO:0044729">
    <property type="term" value="F:hemi-methylated DNA-binding"/>
    <property type="evidence" value="ECO:0000250"/>
    <property type="project" value="UniProtKB"/>
</dbReference>
<dbReference type="GO" id="GO:1990841">
    <property type="term" value="F:promoter-specific chromatin binding"/>
    <property type="evidence" value="ECO:0000250"/>
    <property type="project" value="UniProtKB"/>
</dbReference>
<dbReference type="GO" id="GO:0000978">
    <property type="term" value="F:RNA polymerase II cis-regulatory region sequence-specific DNA binding"/>
    <property type="evidence" value="ECO:0000318"/>
    <property type="project" value="GO_Central"/>
</dbReference>
<dbReference type="GO" id="GO:0043565">
    <property type="term" value="F:sequence-specific DNA binding"/>
    <property type="evidence" value="ECO:0000250"/>
    <property type="project" value="UniProtKB"/>
</dbReference>
<dbReference type="GO" id="GO:0008270">
    <property type="term" value="F:zinc ion binding"/>
    <property type="evidence" value="ECO:0000250"/>
    <property type="project" value="UniProtKB"/>
</dbReference>
<dbReference type="GO" id="GO:0032922">
    <property type="term" value="P:circadian regulation of gene expression"/>
    <property type="evidence" value="ECO:0000250"/>
    <property type="project" value="UniProtKB"/>
</dbReference>
<dbReference type="GO" id="GO:0045893">
    <property type="term" value="P:positive regulation of DNA-templated transcription"/>
    <property type="evidence" value="ECO:0000250"/>
    <property type="project" value="UniProtKB"/>
</dbReference>
<dbReference type="GO" id="GO:0045944">
    <property type="term" value="P:positive regulation of transcription by RNA polymerase II"/>
    <property type="evidence" value="ECO:0000250"/>
    <property type="project" value="UniProtKB"/>
</dbReference>
<dbReference type="GO" id="GO:0006355">
    <property type="term" value="P:regulation of DNA-templated transcription"/>
    <property type="evidence" value="ECO:0000250"/>
    <property type="project" value="UniProtKB"/>
</dbReference>
<dbReference type="GO" id="GO:0006357">
    <property type="term" value="P:regulation of transcription by RNA polymerase II"/>
    <property type="evidence" value="ECO:0000318"/>
    <property type="project" value="GO_Central"/>
</dbReference>
<dbReference type="FunFam" id="3.30.160.60:FF:000769">
    <property type="entry name" value="Early growth response 2b"/>
    <property type="match status" value="1"/>
</dbReference>
<dbReference type="FunFam" id="3.30.160.60:FF:000324">
    <property type="entry name" value="Early growth response protein 4"/>
    <property type="match status" value="1"/>
</dbReference>
<dbReference type="FunFam" id="3.30.160.60:FF:000419">
    <property type="entry name" value="Early growth response protein 4"/>
    <property type="match status" value="1"/>
</dbReference>
<dbReference type="Gene3D" id="3.30.160.60">
    <property type="entry name" value="Classic Zinc Finger"/>
    <property type="match status" value="3"/>
</dbReference>
<dbReference type="InterPro" id="IPR021839">
    <property type="entry name" value="EGR1_C"/>
</dbReference>
<dbReference type="InterPro" id="IPR021849">
    <property type="entry name" value="EGR_N"/>
</dbReference>
<dbReference type="InterPro" id="IPR036236">
    <property type="entry name" value="Znf_C2H2_sf"/>
</dbReference>
<dbReference type="InterPro" id="IPR013087">
    <property type="entry name" value="Znf_C2H2_type"/>
</dbReference>
<dbReference type="PANTHER" id="PTHR23235:SF42">
    <property type="entry name" value="EARLY GROWTH RESPONSE PROTEIN 1"/>
    <property type="match status" value="1"/>
</dbReference>
<dbReference type="PANTHER" id="PTHR23235">
    <property type="entry name" value="KRUEPPEL-LIKE TRANSCRIPTION FACTOR"/>
    <property type="match status" value="1"/>
</dbReference>
<dbReference type="Pfam" id="PF11914">
    <property type="entry name" value="DUF3432"/>
    <property type="match status" value="1"/>
</dbReference>
<dbReference type="Pfam" id="PF11928">
    <property type="entry name" value="DUF3446"/>
    <property type="match status" value="1"/>
</dbReference>
<dbReference type="Pfam" id="PF00096">
    <property type="entry name" value="zf-C2H2"/>
    <property type="match status" value="3"/>
</dbReference>
<dbReference type="SMART" id="SM00355">
    <property type="entry name" value="ZnF_C2H2"/>
    <property type="match status" value="3"/>
</dbReference>
<dbReference type="SUPFAM" id="SSF57667">
    <property type="entry name" value="beta-beta-alpha zinc fingers"/>
    <property type="match status" value="2"/>
</dbReference>
<dbReference type="PROSITE" id="PS00028">
    <property type="entry name" value="ZINC_FINGER_C2H2_1"/>
    <property type="match status" value="3"/>
</dbReference>
<dbReference type="PROSITE" id="PS50157">
    <property type="entry name" value="ZINC_FINGER_C2H2_2"/>
    <property type="match status" value="3"/>
</dbReference>
<gene>
    <name type="primary">egr1-a</name>
    <name type="synonym">egr1</name>
</gene>
<reference evidence="11 12" key="1">
    <citation type="journal article" date="1998" name="EMBO J.">
        <title>The Spemann organizer-expressed zinc finger gene Xegr-1 responds to the MAP kinase/Ets-SRF signal transduction pathway.</title>
        <authorList>
            <person name="Panitz F."/>
            <person name="Krain B."/>
            <person name="Hollemann T."/>
            <person name="Nordheim A."/>
            <person name="Pieler T."/>
        </authorList>
    </citation>
    <scope>NUCLEOTIDE SEQUENCE [MRNA]</scope>
    <scope>TISSUE SPECIFICITY</scope>
    <scope>DEVELOPMENTAL STAGE</scope>
    <scope>INDUCTION</scope>
</reference>
<reference evidence="13" key="2">
    <citation type="submission" date="2004-06" db="EMBL/GenBank/DDBJ databases">
        <authorList>
            <consortium name="NIH - Xenopus Gene Collection (XGC) project"/>
        </authorList>
    </citation>
    <scope>NUCLEOTIDE SEQUENCE [LARGE SCALE MRNA]</scope>
    <source>
        <tissue evidence="13">Spleen</tissue>
    </source>
</reference>
<reference evidence="11" key="3">
    <citation type="journal article" date="1999" name="Int. J. Dev. Biol.">
        <title>Artefactual gene induction during preparation of Xenopus laevis animal cap explants.</title>
        <authorList>
            <person name="Krain B."/>
            <person name="Nordheim A."/>
        </authorList>
    </citation>
    <scope>INDUCTION</scope>
</reference>
<reference evidence="11" key="4">
    <citation type="journal article" date="1999" name="Mech. Dev.">
        <title>Characterization of the Ets-type protein ER81 in Xenopus embryos.</title>
        <authorList>
            <person name="Chen Y."/>
            <person name="Hollemann T."/>
            <person name="Grunz H."/>
            <person name="Pieler T."/>
        </authorList>
    </citation>
    <scope>INDUCTION</scope>
</reference>
<reference evidence="11" key="5">
    <citation type="journal article" date="2000" name="Mech. Dev.">
        <title>A screen for targets of the Xenopus T-box gene Xbra.</title>
        <authorList>
            <person name="Saka Y."/>
            <person name="Tada M."/>
            <person name="Smith J.C."/>
        </authorList>
    </citation>
    <scope>TISSUE SPECIFICITY</scope>
    <scope>INDUCTION</scope>
</reference>
<protein>
    <recommendedName>
        <fullName>Early growth response protein 1-A</fullName>
        <shortName>EGR-1-A</shortName>
        <shortName evidence="10">Xegr-1</shortName>
    </recommendedName>
</protein>
<keyword id="KW-0010">Activator</keyword>
<keyword id="KW-0090">Biological rhythms</keyword>
<keyword id="KW-0963">Cytoplasm</keyword>
<keyword id="KW-0238">DNA-binding</keyword>
<keyword id="KW-0479">Metal-binding</keyword>
<keyword id="KW-0539">Nucleus</keyword>
<keyword id="KW-1185">Reference proteome</keyword>
<keyword id="KW-0677">Repeat</keyword>
<keyword id="KW-0804">Transcription</keyword>
<keyword id="KW-0805">Transcription regulation</keyword>
<keyword id="KW-0862">Zinc</keyword>
<keyword id="KW-0863">Zinc-finger</keyword>
<feature type="chain" id="PRO_0000386427" description="Early growth response protein 1-A">
    <location>
        <begin position="1"/>
        <end position="497"/>
    </location>
</feature>
<feature type="zinc finger region" description="C2H2-type 1" evidence="4">
    <location>
        <begin position="306"/>
        <end position="330"/>
    </location>
</feature>
<feature type="zinc finger region" description="C2H2-type 2" evidence="4">
    <location>
        <begin position="336"/>
        <end position="358"/>
    </location>
</feature>
<feature type="zinc finger region" description="C2H2-type 3" evidence="4">
    <location>
        <begin position="364"/>
        <end position="386"/>
    </location>
</feature>
<feature type="region of interest" description="Disordered" evidence="5">
    <location>
        <begin position="139"/>
        <end position="169"/>
    </location>
</feature>
<feature type="region of interest" description="Disordered" evidence="5">
    <location>
        <begin position="175"/>
        <end position="194"/>
    </location>
</feature>
<feature type="region of interest" description="Disordered" evidence="5">
    <location>
        <begin position="286"/>
        <end position="309"/>
    </location>
</feature>
<feature type="region of interest" description="Disordered" evidence="5">
    <location>
        <begin position="377"/>
        <end position="441"/>
    </location>
</feature>
<feature type="compositionally biased region" description="Low complexity" evidence="5">
    <location>
        <begin position="139"/>
        <end position="165"/>
    </location>
</feature>
<feature type="compositionally biased region" description="Basic residues" evidence="5">
    <location>
        <begin position="381"/>
        <end position="391"/>
    </location>
</feature>
<feature type="compositionally biased region" description="Low complexity" evidence="5">
    <location>
        <begin position="397"/>
        <end position="441"/>
    </location>
</feature>
<feature type="site" description="Interaction with DNA" evidence="2">
    <location>
        <position position="304"/>
    </location>
</feature>
<feature type="site" description="Interaction with DNA" evidence="1">
    <location>
        <position position="315"/>
    </location>
</feature>
<feature type="site" description="Interaction with DNA" evidence="1">
    <location>
        <position position="319"/>
    </location>
</feature>
<feature type="site" description="Interaction with DNA" evidence="2">
    <location>
        <position position="325"/>
    </location>
</feature>
<feature type="site" description="Interaction with DNA" evidence="1">
    <location>
        <position position="343"/>
    </location>
</feature>
<feature type="site" description="Interaction with DNA" evidence="2">
    <location>
        <position position="347"/>
    </location>
</feature>
<feature type="site" description="Interaction with DNA" evidence="2">
    <location>
        <position position="371"/>
    </location>
</feature>
<feature type="site" description="Interaction with DNA" evidence="2">
    <location>
        <position position="375"/>
    </location>
</feature>
<feature type="site" description="Interaction with DNA" evidence="2">
    <location>
        <position position="381"/>
    </location>
</feature>
<feature type="sequence conflict" description="In Ref. 1; AAF66986." evidence="11" ref="1">
    <original>A</original>
    <variation>G</variation>
    <location>
        <position position="447"/>
    </location>
</feature>
<feature type="sequence conflict" description="In Ref. 1; AAF66986." evidence="11" ref="1">
    <original>C</original>
    <variation>W</variation>
    <location>
        <position position="497"/>
    </location>
</feature>
<name>EGR1A_XENLA</name>
<proteinExistence type="evidence at transcript level"/>
<sequence length="497" mass="54142">MAVAKTEMLVSPLQISDPFSSFPHSPTMDNYPKLEEMMLLNAGGPQFLGASVPDGSGFNSTVEGAEQFDHLTADAFSEMSLSSEKALVESSYANQTTRLPSLTYTGRFSLEPATNSSNTLWPEPLFSLVSGLVGMANISPSSAPSSSPSSSSSSSSSQSPPLSCSVQSNDSSPIYSAAPTFPNSSSEIFPDHSPQPFQNASIPYPPPAYPVSKTTFQVPMIPDYLFPQQQGDVSLVSADQKPFQAMESRTQQPSLTPLSTIKAYATHTSQDLKTINSTYQSQIIKPSRMRKYPNRPSKTPPHERPYGCPVESCDRRFSRSDELTRHIRIHTGQKPFQCRICMRNFSRSDHLTTHIRTHTGEKPFACDICGRKFARSDERKRHTKIHLRQKDKKADKATPVSVASPVSSYSPSASTSYPSPVPTSYSSPVSSSYPSPVHSSFPSPTTAVTYPSVTSTFQTHGITSFPSSIMTNAFSSPMSSALSDMSLTYSPRTIEIC</sequence>